<name>ARGR_ECO5E</name>
<evidence type="ECO:0000255" key="1">
    <source>
        <dbReference type="HAMAP-Rule" id="MF_00173"/>
    </source>
</evidence>
<gene>
    <name evidence="1" type="primary">argR</name>
    <name type="ordered locus">ECH74115_4554</name>
</gene>
<keyword id="KW-0028">Amino-acid biosynthesis</keyword>
<keyword id="KW-0055">Arginine biosynthesis</keyword>
<keyword id="KW-0963">Cytoplasm</keyword>
<keyword id="KW-0238">DNA-binding</keyword>
<keyword id="KW-0678">Repressor</keyword>
<keyword id="KW-0804">Transcription</keyword>
<keyword id="KW-0805">Transcription regulation</keyword>
<organism>
    <name type="scientific">Escherichia coli O157:H7 (strain EC4115 / EHEC)</name>
    <dbReference type="NCBI Taxonomy" id="444450"/>
    <lineage>
        <taxon>Bacteria</taxon>
        <taxon>Pseudomonadati</taxon>
        <taxon>Pseudomonadota</taxon>
        <taxon>Gammaproteobacteria</taxon>
        <taxon>Enterobacterales</taxon>
        <taxon>Enterobacteriaceae</taxon>
        <taxon>Escherichia</taxon>
    </lineage>
</organism>
<protein>
    <recommendedName>
        <fullName evidence="1">Arginine repressor</fullName>
    </recommendedName>
</protein>
<dbReference type="EMBL" id="CP001164">
    <property type="protein sequence ID" value="ACI36703.1"/>
    <property type="molecule type" value="Genomic_DNA"/>
</dbReference>
<dbReference type="RefSeq" id="WP_001257846.1">
    <property type="nucleotide sequence ID" value="NC_011353.1"/>
</dbReference>
<dbReference type="SMR" id="B5YSW3"/>
<dbReference type="GeneID" id="93778748"/>
<dbReference type="KEGG" id="ecf:ECH74115_4554"/>
<dbReference type="HOGENOM" id="CLU_097103_2_0_6"/>
<dbReference type="UniPathway" id="UPA00068"/>
<dbReference type="GO" id="GO:0005737">
    <property type="term" value="C:cytoplasm"/>
    <property type="evidence" value="ECO:0007669"/>
    <property type="project" value="UniProtKB-SubCell"/>
</dbReference>
<dbReference type="GO" id="GO:0034618">
    <property type="term" value="F:arginine binding"/>
    <property type="evidence" value="ECO:0007669"/>
    <property type="project" value="InterPro"/>
</dbReference>
<dbReference type="GO" id="GO:0003677">
    <property type="term" value="F:DNA binding"/>
    <property type="evidence" value="ECO:0007669"/>
    <property type="project" value="UniProtKB-KW"/>
</dbReference>
<dbReference type="GO" id="GO:0003700">
    <property type="term" value="F:DNA-binding transcription factor activity"/>
    <property type="evidence" value="ECO:0007669"/>
    <property type="project" value="UniProtKB-UniRule"/>
</dbReference>
<dbReference type="GO" id="GO:0006526">
    <property type="term" value="P:L-arginine biosynthetic process"/>
    <property type="evidence" value="ECO:0007669"/>
    <property type="project" value="UniProtKB-UniPathway"/>
</dbReference>
<dbReference type="GO" id="GO:0051259">
    <property type="term" value="P:protein complex oligomerization"/>
    <property type="evidence" value="ECO:0007669"/>
    <property type="project" value="InterPro"/>
</dbReference>
<dbReference type="GO" id="GO:1900079">
    <property type="term" value="P:regulation of arginine biosynthetic process"/>
    <property type="evidence" value="ECO:0007669"/>
    <property type="project" value="UniProtKB-UniRule"/>
</dbReference>
<dbReference type="FunFam" id="1.10.10.10:FF:000074">
    <property type="entry name" value="Arginine repressor"/>
    <property type="match status" value="1"/>
</dbReference>
<dbReference type="FunFam" id="3.30.1360.40:FF:000004">
    <property type="entry name" value="Arginine repressor"/>
    <property type="match status" value="1"/>
</dbReference>
<dbReference type="Gene3D" id="3.30.1360.40">
    <property type="match status" value="1"/>
</dbReference>
<dbReference type="Gene3D" id="1.10.10.10">
    <property type="entry name" value="Winged helix-like DNA-binding domain superfamily/Winged helix DNA-binding domain"/>
    <property type="match status" value="1"/>
</dbReference>
<dbReference type="HAMAP" id="MF_00173">
    <property type="entry name" value="Arg_repressor"/>
    <property type="match status" value="1"/>
</dbReference>
<dbReference type="InterPro" id="IPR001669">
    <property type="entry name" value="Arg_repress"/>
</dbReference>
<dbReference type="InterPro" id="IPR020899">
    <property type="entry name" value="Arg_repress_C"/>
</dbReference>
<dbReference type="InterPro" id="IPR036251">
    <property type="entry name" value="Arg_repress_C_sf"/>
</dbReference>
<dbReference type="InterPro" id="IPR020900">
    <property type="entry name" value="Arg_repress_DNA-bd"/>
</dbReference>
<dbReference type="InterPro" id="IPR036388">
    <property type="entry name" value="WH-like_DNA-bd_sf"/>
</dbReference>
<dbReference type="InterPro" id="IPR036390">
    <property type="entry name" value="WH_DNA-bd_sf"/>
</dbReference>
<dbReference type="NCBIfam" id="TIGR01529">
    <property type="entry name" value="argR_whole"/>
    <property type="match status" value="1"/>
</dbReference>
<dbReference type="NCBIfam" id="NF003457">
    <property type="entry name" value="PRK05066.1"/>
    <property type="match status" value="1"/>
</dbReference>
<dbReference type="PANTHER" id="PTHR34471">
    <property type="entry name" value="ARGININE REPRESSOR"/>
    <property type="match status" value="1"/>
</dbReference>
<dbReference type="PANTHER" id="PTHR34471:SF1">
    <property type="entry name" value="ARGININE REPRESSOR"/>
    <property type="match status" value="1"/>
</dbReference>
<dbReference type="Pfam" id="PF01316">
    <property type="entry name" value="Arg_repressor"/>
    <property type="match status" value="1"/>
</dbReference>
<dbReference type="Pfam" id="PF02863">
    <property type="entry name" value="Arg_repressor_C"/>
    <property type="match status" value="1"/>
</dbReference>
<dbReference type="PRINTS" id="PR01467">
    <property type="entry name" value="ARGREPRESSOR"/>
</dbReference>
<dbReference type="SUPFAM" id="SSF55252">
    <property type="entry name" value="C-terminal domain of arginine repressor"/>
    <property type="match status" value="1"/>
</dbReference>
<dbReference type="SUPFAM" id="SSF46785">
    <property type="entry name" value="Winged helix' DNA-binding domain"/>
    <property type="match status" value="1"/>
</dbReference>
<comment type="function">
    <text evidence="1">Regulates arginine biosynthesis genes.</text>
</comment>
<comment type="pathway">
    <text>Amino-acid biosynthesis; L-arginine biosynthesis [regulation].</text>
</comment>
<comment type="subcellular location">
    <subcellularLocation>
        <location evidence="1">Cytoplasm</location>
    </subcellularLocation>
</comment>
<comment type="similarity">
    <text evidence="1">Belongs to the ArgR family.</text>
</comment>
<sequence length="156" mass="16995">MRSSAKQEELVKAFKALLKEEKFSSQGEIVAALQEQGFDNINQSKVSRMLTKFGAVRTRNAKMEMVYCLPAELGVPTTSSPLKNLVLDIDYNDAVVVIHTSPGAAQLIARLLDSLGKAEGILGTIAGDDTIFTTPANGFTVKDLYEAILELFDQEL</sequence>
<accession>B5YSW3</accession>
<proteinExistence type="inferred from homology"/>
<feature type="chain" id="PRO_1000097868" description="Arginine repressor">
    <location>
        <begin position="1"/>
        <end position="156"/>
    </location>
</feature>
<reference key="1">
    <citation type="journal article" date="2011" name="Proc. Natl. Acad. Sci. U.S.A.">
        <title>Genomic anatomy of Escherichia coli O157:H7 outbreaks.</title>
        <authorList>
            <person name="Eppinger M."/>
            <person name="Mammel M.K."/>
            <person name="Leclerc J.E."/>
            <person name="Ravel J."/>
            <person name="Cebula T.A."/>
        </authorList>
    </citation>
    <scope>NUCLEOTIDE SEQUENCE [LARGE SCALE GENOMIC DNA]</scope>
    <source>
        <strain>EC4115 / EHEC</strain>
    </source>
</reference>